<proteinExistence type="inferred from homology"/>
<accession>Q88LQ9</accession>
<reference key="1">
    <citation type="journal article" date="2002" name="Environ. Microbiol.">
        <title>Complete genome sequence and comparative analysis of the metabolically versatile Pseudomonas putida KT2440.</title>
        <authorList>
            <person name="Nelson K.E."/>
            <person name="Weinel C."/>
            <person name="Paulsen I.T."/>
            <person name="Dodson R.J."/>
            <person name="Hilbert H."/>
            <person name="Martins dos Santos V.A.P."/>
            <person name="Fouts D.E."/>
            <person name="Gill S.R."/>
            <person name="Pop M."/>
            <person name="Holmes M."/>
            <person name="Brinkac L.M."/>
            <person name="Beanan M.J."/>
            <person name="DeBoy R.T."/>
            <person name="Daugherty S.C."/>
            <person name="Kolonay J.F."/>
            <person name="Madupu R."/>
            <person name="Nelson W.C."/>
            <person name="White O."/>
            <person name="Peterson J.D."/>
            <person name="Khouri H.M."/>
            <person name="Hance I."/>
            <person name="Chris Lee P."/>
            <person name="Holtzapple E.K."/>
            <person name="Scanlan D."/>
            <person name="Tran K."/>
            <person name="Moazzez A."/>
            <person name="Utterback T.R."/>
            <person name="Rizzo M."/>
            <person name="Lee K."/>
            <person name="Kosack D."/>
            <person name="Moestl D."/>
            <person name="Wedler H."/>
            <person name="Lauber J."/>
            <person name="Stjepandic D."/>
            <person name="Hoheisel J."/>
            <person name="Straetz M."/>
            <person name="Heim S."/>
            <person name="Kiewitz C."/>
            <person name="Eisen J.A."/>
            <person name="Timmis K.N."/>
            <person name="Duesterhoeft A."/>
            <person name="Tuemmler B."/>
            <person name="Fraser C.M."/>
        </authorList>
    </citation>
    <scope>NUCLEOTIDE SEQUENCE [LARGE SCALE GENOMIC DNA]</scope>
    <source>
        <strain>ATCC 47054 / DSM 6125 / CFBP 8728 / NCIMB 11950 / KT2440</strain>
    </source>
</reference>
<keyword id="KW-0963">Cytoplasm</keyword>
<keyword id="KW-0489">Methyltransferase</keyword>
<keyword id="KW-1185">Reference proteome</keyword>
<keyword id="KW-0949">S-adenosyl-L-methionine</keyword>
<keyword id="KW-0808">Transferase</keyword>
<organism>
    <name type="scientific">Pseudomonas putida (strain ATCC 47054 / DSM 6125 / CFBP 8728 / NCIMB 11950 / KT2440)</name>
    <dbReference type="NCBI Taxonomy" id="160488"/>
    <lineage>
        <taxon>Bacteria</taxon>
        <taxon>Pseudomonadati</taxon>
        <taxon>Pseudomonadota</taxon>
        <taxon>Gammaproteobacteria</taxon>
        <taxon>Pseudomonadales</taxon>
        <taxon>Pseudomonadaceae</taxon>
        <taxon>Pseudomonas</taxon>
    </lineage>
</organism>
<sequence>MEPAFWQQRWADNQIGFHQAQVNPYLQTYWPQLQLAPGSRVLVPLCGKSLDLAWLAGQGHRVLGVELSRRAVEDFFREHGLEAEVRQQGAFEVWRSGDVQLWCGDFFALRAEDVADCVGLYDRAAVIALPVQMRARYMQLLSGLLPANCRGLVVTLEYDQSLLAGPPFSVRDEELRQGFAGWQVEQLEAVDVIEDSPKFVQAGASSLLERVYQVSR</sequence>
<protein>
    <recommendedName>
        <fullName evidence="1">Thiopurine S-methyltransferase</fullName>
        <ecNumber evidence="1">2.1.1.67</ecNumber>
    </recommendedName>
    <alternativeName>
        <fullName evidence="1">Thiopurine methyltransferase</fullName>
    </alternativeName>
</protein>
<feature type="chain" id="PRO_0000220128" description="Thiopurine S-methyltransferase">
    <location>
        <begin position="1"/>
        <end position="216"/>
    </location>
</feature>
<feature type="binding site" evidence="1">
    <location>
        <position position="10"/>
    </location>
    <ligand>
        <name>S-adenosyl-L-methionine</name>
        <dbReference type="ChEBI" id="CHEBI:59789"/>
    </ligand>
</feature>
<feature type="binding site" evidence="1">
    <location>
        <position position="45"/>
    </location>
    <ligand>
        <name>S-adenosyl-L-methionine</name>
        <dbReference type="ChEBI" id="CHEBI:59789"/>
    </ligand>
</feature>
<feature type="binding site" evidence="1">
    <location>
        <position position="66"/>
    </location>
    <ligand>
        <name>S-adenosyl-L-methionine</name>
        <dbReference type="ChEBI" id="CHEBI:59789"/>
    </ligand>
</feature>
<feature type="binding site" evidence="1">
    <location>
        <position position="123"/>
    </location>
    <ligand>
        <name>S-adenosyl-L-methionine</name>
        <dbReference type="ChEBI" id="CHEBI:59789"/>
    </ligand>
</feature>
<dbReference type="EC" id="2.1.1.67" evidence="1"/>
<dbReference type="EMBL" id="AE015451">
    <property type="protein sequence ID" value="AAN67489.1"/>
    <property type="molecule type" value="Genomic_DNA"/>
</dbReference>
<dbReference type="RefSeq" id="NP_744025.1">
    <property type="nucleotide sequence ID" value="NC_002947.4"/>
</dbReference>
<dbReference type="RefSeq" id="WP_010952898.1">
    <property type="nucleotide sequence ID" value="NZ_CP169744.1"/>
</dbReference>
<dbReference type="SMR" id="Q88LQ9"/>
<dbReference type="STRING" id="160488.PP_1870"/>
<dbReference type="PaxDb" id="160488-PP_1870"/>
<dbReference type="KEGG" id="ppu:PP_1870"/>
<dbReference type="PATRIC" id="fig|160488.4.peg.1972"/>
<dbReference type="eggNOG" id="COG0500">
    <property type="taxonomic scope" value="Bacteria"/>
</dbReference>
<dbReference type="HOGENOM" id="CLU_085515_1_0_6"/>
<dbReference type="OrthoDB" id="9778208at2"/>
<dbReference type="PhylomeDB" id="Q88LQ9"/>
<dbReference type="BioCyc" id="PPUT160488:G1G01-1974-MONOMER"/>
<dbReference type="Proteomes" id="UP000000556">
    <property type="component" value="Chromosome"/>
</dbReference>
<dbReference type="GO" id="GO:0005737">
    <property type="term" value="C:cytoplasm"/>
    <property type="evidence" value="ECO:0007669"/>
    <property type="project" value="UniProtKB-SubCell"/>
</dbReference>
<dbReference type="GO" id="GO:0008119">
    <property type="term" value="F:thiopurine S-methyltransferase activity"/>
    <property type="evidence" value="ECO:0007669"/>
    <property type="project" value="UniProtKB-UniRule"/>
</dbReference>
<dbReference type="GO" id="GO:0032259">
    <property type="term" value="P:methylation"/>
    <property type="evidence" value="ECO:0007669"/>
    <property type="project" value="UniProtKB-KW"/>
</dbReference>
<dbReference type="GO" id="GO:0010038">
    <property type="term" value="P:response to metal ion"/>
    <property type="evidence" value="ECO:0007669"/>
    <property type="project" value="InterPro"/>
</dbReference>
<dbReference type="FunFam" id="3.40.50.150:FF:000101">
    <property type="entry name" value="Thiopurine S-methyltransferase"/>
    <property type="match status" value="1"/>
</dbReference>
<dbReference type="Gene3D" id="3.40.50.150">
    <property type="entry name" value="Vaccinia Virus protein VP39"/>
    <property type="match status" value="1"/>
</dbReference>
<dbReference type="HAMAP" id="MF_00812">
    <property type="entry name" value="Thiopur_methtran"/>
    <property type="match status" value="1"/>
</dbReference>
<dbReference type="InterPro" id="IPR029063">
    <property type="entry name" value="SAM-dependent_MTases_sf"/>
</dbReference>
<dbReference type="InterPro" id="IPR022474">
    <property type="entry name" value="Thiopur_S-MeTfrase_Se/Te_detox"/>
</dbReference>
<dbReference type="InterPro" id="IPR025835">
    <property type="entry name" value="Thiopurine_S-MeTrfase"/>
</dbReference>
<dbReference type="InterPro" id="IPR008854">
    <property type="entry name" value="TPMT"/>
</dbReference>
<dbReference type="NCBIfam" id="NF009732">
    <property type="entry name" value="PRK13255.1"/>
    <property type="match status" value="1"/>
</dbReference>
<dbReference type="NCBIfam" id="TIGR03840">
    <property type="entry name" value="TMPT_Se_Te"/>
    <property type="match status" value="1"/>
</dbReference>
<dbReference type="PANTHER" id="PTHR10259">
    <property type="entry name" value="THIOPURINE S-METHYLTRANSFERASE"/>
    <property type="match status" value="1"/>
</dbReference>
<dbReference type="PANTHER" id="PTHR10259:SF11">
    <property type="entry name" value="THIOPURINE S-METHYLTRANSFERASE"/>
    <property type="match status" value="1"/>
</dbReference>
<dbReference type="Pfam" id="PF05724">
    <property type="entry name" value="TPMT"/>
    <property type="match status" value="1"/>
</dbReference>
<dbReference type="PIRSF" id="PIRSF023956">
    <property type="entry name" value="Thiopurine_S-methyltransferase"/>
    <property type="match status" value="1"/>
</dbReference>
<dbReference type="SUPFAM" id="SSF53335">
    <property type="entry name" value="S-adenosyl-L-methionine-dependent methyltransferases"/>
    <property type="match status" value="1"/>
</dbReference>
<dbReference type="PROSITE" id="PS51585">
    <property type="entry name" value="SAM_MT_TPMT"/>
    <property type="match status" value="1"/>
</dbReference>
<gene>
    <name evidence="1" type="primary">tpm</name>
    <name type="ordered locus">PP_1870</name>
</gene>
<name>TPMT_PSEPK</name>
<evidence type="ECO:0000255" key="1">
    <source>
        <dbReference type="HAMAP-Rule" id="MF_00812"/>
    </source>
</evidence>
<comment type="catalytic activity">
    <reaction evidence="1">
        <text>S-adenosyl-L-methionine + a thiopurine = S-adenosyl-L-homocysteine + a thiopurine S-methylether.</text>
        <dbReference type="EC" id="2.1.1.67"/>
    </reaction>
</comment>
<comment type="subcellular location">
    <subcellularLocation>
        <location evidence="1">Cytoplasm</location>
    </subcellularLocation>
</comment>
<comment type="similarity">
    <text evidence="1">Belongs to the class I-like SAM-binding methyltransferase superfamily. TPMT family.</text>
</comment>